<dbReference type="EC" id="3.1.1.4"/>
<dbReference type="EMBL" id="AF184131">
    <property type="protein sequence ID" value="AAD56554.1"/>
    <property type="molecule type" value="mRNA"/>
</dbReference>
<dbReference type="SMR" id="Q9PUH9"/>
<dbReference type="GO" id="GO:0005576">
    <property type="term" value="C:extracellular region"/>
    <property type="evidence" value="ECO:0007669"/>
    <property type="project" value="UniProtKB-SubCell"/>
</dbReference>
<dbReference type="GO" id="GO:0005509">
    <property type="term" value="F:calcium ion binding"/>
    <property type="evidence" value="ECO:0007669"/>
    <property type="project" value="InterPro"/>
</dbReference>
<dbReference type="GO" id="GO:0047498">
    <property type="term" value="F:calcium-dependent phospholipase A2 activity"/>
    <property type="evidence" value="ECO:0007669"/>
    <property type="project" value="TreeGrafter"/>
</dbReference>
<dbReference type="GO" id="GO:0005543">
    <property type="term" value="F:phospholipid binding"/>
    <property type="evidence" value="ECO:0007669"/>
    <property type="project" value="TreeGrafter"/>
</dbReference>
<dbReference type="GO" id="GO:0090729">
    <property type="term" value="F:toxin activity"/>
    <property type="evidence" value="ECO:0007669"/>
    <property type="project" value="UniProtKB-KW"/>
</dbReference>
<dbReference type="GO" id="GO:0050482">
    <property type="term" value="P:arachidonate secretion"/>
    <property type="evidence" value="ECO:0007669"/>
    <property type="project" value="InterPro"/>
</dbReference>
<dbReference type="GO" id="GO:0016042">
    <property type="term" value="P:lipid catabolic process"/>
    <property type="evidence" value="ECO:0007669"/>
    <property type="project" value="UniProtKB-KW"/>
</dbReference>
<dbReference type="GO" id="GO:0006644">
    <property type="term" value="P:phospholipid metabolic process"/>
    <property type="evidence" value="ECO:0007669"/>
    <property type="project" value="InterPro"/>
</dbReference>
<dbReference type="CDD" id="cd00125">
    <property type="entry name" value="PLA2c"/>
    <property type="match status" value="1"/>
</dbReference>
<dbReference type="FunFam" id="1.20.90.10:FF:000007">
    <property type="entry name" value="Acidic phospholipase A2"/>
    <property type="match status" value="1"/>
</dbReference>
<dbReference type="Gene3D" id="1.20.90.10">
    <property type="entry name" value="Phospholipase A2 domain"/>
    <property type="match status" value="1"/>
</dbReference>
<dbReference type="InterPro" id="IPR001211">
    <property type="entry name" value="PLipase_A2"/>
</dbReference>
<dbReference type="InterPro" id="IPR033112">
    <property type="entry name" value="PLipase_A2_Asp_AS"/>
</dbReference>
<dbReference type="InterPro" id="IPR016090">
    <property type="entry name" value="PLipase_A2_dom"/>
</dbReference>
<dbReference type="InterPro" id="IPR036444">
    <property type="entry name" value="PLipase_A2_dom_sf"/>
</dbReference>
<dbReference type="InterPro" id="IPR033113">
    <property type="entry name" value="PLipase_A2_His_AS"/>
</dbReference>
<dbReference type="PANTHER" id="PTHR11716:SF51">
    <property type="entry name" value="PHOSPHOLIPASE A2"/>
    <property type="match status" value="1"/>
</dbReference>
<dbReference type="PANTHER" id="PTHR11716">
    <property type="entry name" value="PHOSPHOLIPASE A2 FAMILY MEMBER"/>
    <property type="match status" value="1"/>
</dbReference>
<dbReference type="Pfam" id="PF00068">
    <property type="entry name" value="Phospholip_A2_1"/>
    <property type="match status" value="1"/>
</dbReference>
<dbReference type="PRINTS" id="PR00389">
    <property type="entry name" value="PHPHLIPASEA2"/>
</dbReference>
<dbReference type="SMART" id="SM00085">
    <property type="entry name" value="PA2c"/>
    <property type="match status" value="1"/>
</dbReference>
<dbReference type="SUPFAM" id="SSF48619">
    <property type="entry name" value="Phospholipase A2, PLA2"/>
    <property type="match status" value="1"/>
</dbReference>
<dbReference type="PROSITE" id="PS00119">
    <property type="entry name" value="PA2_ASP"/>
    <property type="match status" value="1"/>
</dbReference>
<dbReference type="PROSITE" id="PS00118">
    <property type="entry name" value="PA2_HIS"/>
    <property type="match status" value="1"/>
</dbReference>
<reference key="1">
    <citation type="journal article" date="2000" name="Arch. Biochem. Biophys.">
        <title>Phospholipase A(2) with platelet aggregation inhibitor activity from Austrelaps superbus venom: protein purification and cDNA cloning.</title>
        <authorList>
            <person name="Singh S.B."/>
            <person name="Armugam A."/>
            <person name="Kini R.M."/>
            <person name="Jeyaseelan K."/>
        </authorList>
    </citation>
    <scope>NUCLEOTIDE SEQUENCE [MRNA]</scope>
    <source>
        <tissue>Venom gland</tissue>
    </source>
</reference>
<proteinExistence type="evidence at transcript level"/>
<accession>Q9PUH9</accession>
<organism>
    <name type="scientific">Austrelaps superbus</name>
    <name type="common">Lowland copperhead snake</name>
    <name type="synonym">Hoplocephalus superbus</name>
    <dbReference type="NCBI Taxonomy" id="29156"/>
    <lineage>
        <taxon>Eukaryota</taxon>
        <taxon>Metazoa</taxon>
        <taxon>Chordata</taxon>
        <taxon>Craniata</taxon>
        <taxon>Vertebrata</taxon>
        <taxon>Euteleostomi</taxon>
        <taxon>Lepidosauria</taxon>
        <taxon>Squamata</taxon>
        <taxon>Bifurcata</taxon>
        <taxon>Unidentata</taxon>
        <taxon>Episquamata</taxon>
        <taxon>Toxicofera</taxon>
        <taxon>Serpentes</taxon>
        <taxon>Colubroidea</taxon>
        <taxon>Elapidae</taxon>
        <taxon>Hydrophiinae</taxon>
        <taxon>Austrelaps</taxon>
    </lineage>
</organism>
<sequence length="147" mass="16389">MYPAHLLVLLAVCVSLLGASDIPPQPLNLYQFSNMIQCANRGRRPTKHYMDYGCYCGKGGSGTPVDELDRCCKVHDDCYGEAEKSQNCAPYWTWYTWKCGSDGPQCDDSETGCQRSVCECDAIAAKCFAKAPYNDANWDIDTETRCQ</sequence>
<comment type="function">
    <text evidence="1">Snake venom phospholipase A2 (PLA2) that inhibits collagen-induced platelet aggregation. PLA2 catalyzes the calcium-dependent hydrolysis of the 2-acyl groups in 3-sn-phosphoglycerides (By similarity).</text>
</comment>
<comment type="catalytic activity">
    <reaction evidence="3 4">
        <text>a 1,2-diacyl-sn-glycero-3-phosphocholine + H2O = a 1-acyl-sn-glycero-3-phosphocholine + a fatty acid + H(+)</text>
        <dbReference type="Rhea" id="RHEA:15801"/>
        <dbReference type="ChEBI" id="CHEBI:15377"/>
        <dbReference type="ChEBI" id="CHEBI:15378"/>
        <dbReference type="ChEBI" id="CHEBI:28868"/>
        <dbReference type="ChEBI" id="CHEBI:57643"/>
        <dbReference type="ChEBI" id="CHEBI:58168"/>
        <dbReference type="EC" id="3.1.1.4"/>
    </reaction>
</comment>
<comment type="cofactor">
    <cofactor evidence="1">
        <name>Ca(2+)</name>
        <dbReference type="ChEBI" id="CHEBI:29108"/>
    </cofactor>
    <text evidence="1">Binds 1 Ca(2+) ion.</text>
</comment>
<comment type="subcellular location">
    <subcellularLocation>
        <location evidence="1">Secreted</location>
    </subcellularLocation>
</comment>
<comment type="tissue specificity">
    <text>Expressed by the venom gland.</text>
</comment>
<comment type="similarity">
    <text evidence="5">Belongs to the phospholipase A2 family. Group I subfamily. D49 sub-subfamily.</text>
</comment>
<protein>
    <recommendedName>
        <fullName>Acidic phospholipase A2 S9-53F</fullName>
        <shortName>svPLA2</shortName>
        <ecNumber>3.1.1.4</ecNumber>
    </recommendedName>
    <alternativeName>
        <fullName>ASPLA5</fullName>
    </alternativeName>
    <alternativeName>
        <fullName>Phosphatidylcholine 2-acylhydrolase</fullName>
    </alternativeName>
</protein>
<keyword id="KW-0106">Calcium</keyword>
<keyword id="KW-1015">Disulfide bond</keyword>
<keyword id="KW-1199">Hemostasis impairing toxin</keyword>
<keyword id="KW-0378">Hydrolase</keyword>
<keyword id="KW-0442">Lipid degradation</keyword>
<keyword id="KW-0443">Lipid metabolism</keyword>
<keyword id="KW-0479">Metal-binding</keyword>
<keyword id="KW-1201">Platelet aggregation inhibiting toxin</keyword>
<keyword id="KW-0964">Secreted</keyword>
<keyword id="KW-0732">Signal</keyword>
<keyword id="KW-0800">Toxin</keyword>
<evidence type="ECO:0000250" key="1"/>
<evidence type="ECO:0000255" key="2"/>
<evidence type="ECO:0000255" key="3">
    <source>
        <dbReference type="PROSITE-ProRule" id="PRU10035"/>
    </source>
</evidence>
<evidence type="ECO:0000255" key="4">
    <source>
        <dbReference type="PROSITE-ProRule" id="PRU10036"/>
    </source>
</evidence>
<evidence type="ECO:0000305" key="5"/>
<feature type="signal peptide" evidence="2">
    <location>
        <begin position="1"/>
        <end position="19"/>
    </location>
</feature>
<feature type="propeptide" id="PRO_0000022793" evidence="2">
    <location>
        <begin position="20"/>
        <end position="27"/>
    </location>
</feature>
<feature type="chain" id="PRO_0000022794" description="Acidic phospholipase A2 S9-53F">
    <location>
        <begin position="28"/>
        <end position="147"/>
    </location>
</feature>
<feature type="active site" evidence="1">
    <location>
        <position position="75"/>
    </location>
</feature>
<feature type="active site" evidence="1">
    <location>
        <position position="121"/>
    </location>
</feature>
<feature type="binding site" evidence="1">
    <location>
        <position position="55"/>
    </location>
    <ligand>
        <name>Ca(2+)</name>
        <dbReference type="ChEBI" id="CHEBI:29108"/>
    </ligand>
</feature>
<feature type="binding site" evidence="1">
    <location>
        <position position="57"/>
    </location>
    <ligand>
        <name>Ca(2+)</name>
        <dbReference type="ChEBI" id="CHEBI:29108"/>
    </ligand>
</feature>
<feature type="binding site" evidence="1">
    <location>
        <position position="59"/>
    </location>
    <ligand>
        <name>Ca(2+)</name>
        <dbReference type="ChEBI" id="CHEBI:29108"/>
    </ligand>
</feature>
<feature type="binding site" evidence="1">
    <location>
        <position position="76"/>
    </location>
    <ligand>
        <name>Ca(2+)</name>
        <dbReference type="ChEBI" id="CHEBI:29108"/>
    </ligand>
</feature>
<feature type="disulfide bond" evidence="1">
    <location>
        <begin position="38"/>
        <end position="99"/>
    </location>
</feature>
<feature type="disulfide bond" evidence="1">
    <location>
        <begin position="54"/>
        <end position="146"/>
    </location>
</feature>
<feature type="disulfide bond" evidence="1">
    <location>
        <begin position="56"/>
        <end position="72"/>
    </location>
</feature>
<feature type="disulfide bond" evidence="1">
    <location>
        <begin position="71"/>
        <end position="127"/>
    </location>
</feature>
<feature type="disulfide bond" evidence="1">
    <location>
        <begin position="78"/>
        <end position="120"/>
    </location>
</feature>
<feature type="disulfide bond" evidence="1">
    <location>
        <begin position="88"/>
        <end position="113"/>
    </location>
</feature>
<feature type="disulfide bond" evidence="1">
    <location>
        <begin position="106"/>
        <end position="118"/>
    </location>
</feature>
<name>PA2A5_AUSSU</name>